<evidence type="ECO:0000255" key="1">
    <source>
        <dbReference type="HAMAP-Rule" id="MF_00631"/>
    </source>
</evidence>
<comment type="function">
    <text evidence="1">Involved in cell division.</text>
</comment>
<comment type="subcellular location">
    <subcellularLocation>
        <location evidence="1">Cell membrane</location>
        <topology evidence="1">Multi-pass membrane protein</topology>
    </subcellularLocation>
</comment>
<comment type="similarity">
    <text evidence="1">Belongs to the CrgA family.</text>
</comment>
<feature type="chain" id="PRO_0000216813" description="Cell division protein CrgA">
    <location>
        <begin position="1"/>
        <end position="93"/>
    </location>
</feature>
<feature type="transmembrane region" description="Helical" evidence="1">
    <location>
        <begin position="31"/>
        <end position="51"/>
    </location>
</feature>
<feature type="transmembrane region" description="Helical" evidence="1">
    <location>
        <begin position="70"/>
        <end position="90"/>
    </location>
</feature>
<gene>
    <name evidence="1" type="primary">crgA</name>
    <name type="ordered locus">ML0013</name>
</gene>
<name>CRGA_MYCLE</name>
<reference key="1">
    <citation type="journal article" date="2001" name="Nature">
        <title>Massive gene decay in the leprosy bacillus.</title>
        <authorList>
            <person name="Cole S.T."/>
            <person name="Eiglmeier K."/>
            <person name="Parkhill J."/>
            <person name="James K.D."/>
            <person name="Thomson N.R."/>
            <person name="Wheeler P.R."/>
            <person name="Honore N."/>
            <person name="Garnier T."/>
            <person name="Churcher C.M."/>
            <person name="Harris D.E."/>
            <person name="Mungall K.L."/>
            <person name="Basham D."/>
            <person name="Brown D."/>
            <person name="Chillingworth T."/>
            <person name="Connor R."/>
            <person name="Davies R.M."/>
            <person name="Devlin K."/>
            <person name="Duthoy S."/>
            <person name="Feltwell T."/>
            <person name="Fraser A."/>
            <person name="Hamlin N."/>
            <person name="Holroyd S."/>
            <person name="Hornsby T."/>
            <person name="Jagels K."/>
            <person name="Lacroix C."/>
            <person name="Maclean J."/>
            <person name="Moule S."/>
            <person name="Murphy L.D."/>
            <person name="Oliver K."/>
            <person name="Quail M.A."/>
            <person name="Rajandream M.A."/>
            <person name="Rutherford K.M."/>
            <person name="Rutter S."/>
            <person name="Seeger K."/>
            <person name="Simon S."/>
            <person name="Simmonds M."/>
            <person name="Skelton J."/>
            <person name="Squares R."/>
            <person name="Squares S."/>
            <person name="Stevens K."/>
            <person name="Taylor K."/>
            <person name="Whitehead S."/>
            <person name="Woodward J.R."/>
            <person name="Barrell B.G."/>
        </authorList>
    </citation>
    <scope>NUCLEOTIDE SEQUENCE [LARGE SCALE GENOMIC DNA]</scope>
    <source>
        <strain>TN</strain>
    </source>
</reference>
<protein>
    <recommendedName>
        <fullName evidence="1">Cell division protein CrgA</fullName>
    </recommendedName>
</protein>
<organism>
    <name type="scientific">Mycobacterium leprae (strain TN)</name>
    <dbReference type="NCBI Taxonomy" id="272631"/>
    <lineage>
        <taxon>Bacteria</taxon>
        <taxon>Bacillati</taxon>
        <taxon>Actinomycetota</taxon>
        <taxon>Actinomycetes</taxon>
        <taxon>Mycobacteriales</taxon>
        <taxon>Mycobacteriaceae</taxon>
        <taxon>Mycobacterium</taxon>
    </lineage>
</organism>
<sequence length="93" mass="10465">MPKSKVRKKNDFTITSVSRTPVKVKVGPSSVWFVTLFVGLMLIGLVWLMVFQLAALGTQAPTALHWMAQLGPWNYAIAFAFMITGLLLTMRWH</sequence>
<dbReference type="EMBL" id="AL583917">
    <property type="protein sequence ID" value="CAC29521.1"/>
    <property type="molecule type" value="Genomic_DNA"/>
</dbReference>
<dbReference type="PIR" id="E86910">
    <property type="entry name" value="E86910"/>
</dbReference>
<dbReference type="RefSeq" id="NP_301140.1">
    <property type="nucleotide sequence ID" value="NC_002677.1"/>
</dbReference>
<dbReference type="RefSeq" id="WP_010907465.1">
    <property type="nucleotide sequence ID" value="NC_002677.1"/>
</dbReference>
<dbReference type="SMR" id="Q9CDE7"/>
<dbReference type="STRING" id="272631.gene:17573824"/>
<dbReference type="KEGG" id="mle:ML0013"/>
<dbReference type="PATRIC" id="fig|272631.5.peg.14"/>
<dbReference type="Leproma" id="ML0013"/>
<dbReference type="eggNOG" id="ENOG5031Y35">
    <property type="taxonomic scope" value="Bacteria"/>
</dbReference>
<dbReference type="HOGENOM" id="CLU_149126_2_0_11"/>
<dbReference type="OrthoDB" id="5189646at2"/>
<dbReference type="Proteomes" id="UP000000806">
    <property type="component" value="Chromosome"/>
</dbReference>
<dbReference type="GO" id="GO:0005886">
    <property type="term" value="C:plasma membrane"/>
    <property type="evidence" value="ECO:0007669"/>
    <property type="project" value="UniProtKB-SubCell"/>
</dbReference>
<dbReference type="GO" id="GO:0051301">
    <property type="term" value="P:cell division"/>
    <property type="evidence" value="ECO:0007669"/>
    <property type="project" value="UniProtKB-UniRule"/>
</dbReference>
<dbReference type="HAMAP" id="MF_00631">
    <property type="entry name" value="CrgA"/>
    <property type="match status" value="1"/>
</dbReference>
<dbReference type="InterPro" id="IPR009619">
    <property type="entry name" value="CrgA"/>
</dbReference>
<dbReference type="NCBIfam" id="NF001194">
    <property type="entry name" value="PRK00159.1"/>
    <property type="match status" value="1"/>
</dbReference>
<dbReference type="Pfam" id="PF06781">
    <property type="entry name" value="CrgA"/>
    <property type="match status" value="1"/>
</dbReference>
<accession>Q9CDE7</accession>
<proteinExistence type="inferred from homology"/>
<keyword id="KW-0131">Cell cycle</keyword>
<keyword id="KW-0132">Cell division</keyword>
<keyword id="KW-1003">Cell membrane</keyword>
<keyword id="KW-0472">Membrane</keyword>
<keyword id="KW-1185">Reference proteome</keyword>
<keyword id="KW-0812">Transmembrane</keyword>
<keyword id="KW-1133">Transmembrane helix</keyword>